<keyword id="KW-0238">DNA-binding</keyword>
<keyword id="KW-1185">Reference proteome</keyword>
<keyword id="KW-0804">Transcription</keyword>
<keyword id="KW-0805">Transcription regulation</keyword>
<organism>
    <name type="scientific">Mycobacterium tuberculosis (strain CDC 1551 / Oshkosh)</name>
    <dbReference type="NCBI Taxonomy" id="83331"/>
    <lineage>
        <taxon>Bacteria</taxon>
        <taxon>Bacillati</taxon>
        <taxon>Actinomycetota</taxon>
        <taxon>Actinomycetes</taxon>
        <taxon>Mycobacteriales</taxon>
        <taxon>Mycobacteriaceae</taxon>
        <taxon>Mycobacterium</taxon>
        <taxon>Mycobacterium tuberculosis complex</taxon>
    </lineage>
</organism>
<dbReference type="EMBL" id="AE000516">
    <property type="protein sequence ID" value="AAK46594.1"/>
    <property type="status" value="ALT_INIT"/>
    <property type="molecule type" value="Genomic_DNA"/>
</dbReference>
<dbReference type="PIR" id="F70779">
    <property type="entry name" value="F70779"/>
</dbReference>
<dbReference type="RefSeq" id="WP_003411595.1">
    <property type="nucleotide sequence ID" value="NZ_KK341227.1"/>
</dbReference>
<dbReference type="SMR" id="P9WMC4"/>
<dbReference type="KEGG" id="mtc:MT2310"/>
<dbReference type="PATRIC" id="fig|83331.31.peg.2487"/>
<dbReference type="HOGENOM" id="CLU_069356_39_2_11"/>
<dbReference type="Proteomes" id="UP000001020">
    <property type="component" value="Chromosome"/>
</dbReference>
<dbReference type="GO" id="GO:0003700">
    <property type="term" value="F:DNA-binding transcription factor activity"/>
    <property type="evidence" value="ECO:0007669"/>
    <property type="project" value="TreeGrafter"/>
</dbReference>
<dbReference type="GO" id="GO:0000976">
    <property type="term" value="F:transcription cis-regulatory region binding"/>
    <property type="evidence" value="ECO:0007669"/>
    <property type="project" value="TreeGrafter"/>
</dbReference>
<dbReference type="Gene3D" id="1.10.357.10">
    <property type="entry name" value="Tetracycline Repressor, domain 2"/>
    <property type="match status" value="1"/>
</dbReference>
<dbReference type="InterPro" id="IPR023772">
    <property type="entry name" value="DNA-bd_HTH_TetR-type_CS"/>
</dbReference>
<dbReference type="InterPro" id="IPR009057">
    <property type="entry name" value="Homeodomain-like_sf"/>
</dbReference>
<dbReference type="InterPro" id="IPR050109">
    <property type="entry name" value="HTH-type_TetR-like_transc_reg"/>
</dbReference>
<dbReference type="InterPro" id="IPR001647">
    <property type="entry name" value="HTH_TetR"/>
</dbReference>
<dbReference type="InterPro" id="IPR036271">
    <property type="entry name" value="Tet_transcr_reg_TetR-rel_C_sf"/>
</dbReference>
<dbReference type="PANTHER" id="PTHR30055">
    <property type="entry name" value="HTH-TYPE TRANSCRIPTIONAL REGULATOR RUTR"/>
    <property type="match status" value="1"/>
</dbReference>
<dbReference type="PANTHER" id="PTHR30055:SF238">
    <property type="entry name" value="MYCOFACTOCIN BIOSYNTHESIS TRANSCRIPTIONAL REGULATOR MFTR-RELATED"/>
    <property type="match status" value="1"/>
</dbReference>
<dbReference type="Pfam" id="PF00440">
    <property type="entry name" value="TetR_N"/>
    <property type="match status" value="1"/>
</dbReference>
<dbReference type="PRINTS" id="PR00455">
    <property type="entry name" value="HTHTETR"/>
</dbReference>
<dbReference type="SUPFAM" id="SSF46689">
    <property type="entry name" value="Homeodomain-like"/>
    <property type="match status" value="1"/>
</dbReference>
<dbReference type="SUPFAM" id="SSF48498">
    <property type="entry name" value="Tetracyclin repressor-like, C-terminal domain"/>
    <property type="match status" value="1"/>
</dbReference>
<dbReference type="PROSITE" id="PS01081">
    <property type="entry name" value="HTH_TETR_1"/>
    <property type="match status" value="1"/>
</dbReference>
<dbReference type="PROSITE" id="PS50977">
    <property type="entry name" value="HTH_TETR_2"/>
    <property type="match status" value="1"/>
</dbReference>
<accession>P9WMC4</accession>
<accession>L0T996</accession>
<accession>Q10528</accession>
<reference key="1">
    <citation type="journal article" date="2002" name="J. Bacteriol.">
        <title>Whole-genome comparison of Mycobacterium tuberculosis clinical and laboratory strains.</title>
        <authorList>
            <person name="Fleischmann R.D."/>
            <person name="Alland D."/>
            <person name="Eisen J.A."/>
            <person name="Carpenter L."/>
            <person name="White O."/>
            <person name="Peterson J.D."/>
            <person name="DeBoy R.T."/>
            <person name="Dodson R.J."/>
            <person name="Gwinn M.L."/>
            <person name="Haft D.H."/>
            <person name="Hickey E.K."/>
            <person name="Kolonay J.F."/>
            <person name="Nelson W.C."/>
            <person name="Umayam L.A."/>
            <person name="Ermolaeva M.D."/>
            <person name="Salzberg S.L."/>
            <person name="Delcher A."/>
            <person name="Utterback T.R."/>
            <person name="Weidman J.F."/>
            <person name="Khouri H.M."/>
            <person name="Gill J."/>
            <person name="Mikula A."/>
            <person name="Bishai W."/>
            <person name="Jacobs W.R. Jr."/>
            <person name="Venter J.C."/>
            <person name="Fraser C.M."/>
        </authorList>
    </citation>
    <scope>NUCLEOTIDE SEQUENCE [LARGE SCALE GENOMIC DNA]</scope>
    <source>
        <strain>CDC 1551 / Oshkosh</strain>
    </source>
</reference>
<protein>
    <recommendedName>
        <fullName>Uncharacterized HTH-type transcriptional regulator MT2310</fullName>
    </recommendedName>
</protein>
<feature type="chain" id="PRO_0000427328" description="Uncharacterized HTH-type transcriptional regulator MT2310">
    <location>
        <begin position="1"/>
        <end position="189"/>
    </location>
</feature>
<feature type="domain" description="HTH tetR-type" evidence="1">
    <location>
        <begin position="9"/>
        <end position="69"/>
    </location>
</feature>
<feature type="DNA-binding region" description="H-T-H motif" evidence="1">
    <location>
        <begin position="32"/>
        <end position="51"/>
    </location>
</feature>
<comment type="sequence caution" evidence="2">
    <conflict type="erroneous initiation">
        <sequence resource="EMBL-CDS" id="AAK46594"/>
    </conflict>
</comment>
<sequence>MLSMSNDRADTGGRILRAAASCVVDYGVDRVTLAEIARRAGVSRPTVYRRWPDTRSIMASMLTSHIADVLREVPLDGDDREALVKQIVAVADRLRGDDLIMSVMHSELARVYITERLGTSQQVLIEGLAARLTVAQRSGSVRSGDARRLATMVLLIAQSTIQSADIVDSILDSAALATELTHALNGYLC</sequence>
<proteinExistence type="predicted"/>
<name>Y2250_MYCTO</name>
<gene>
    <name type="ordered locus">MT2310</name>
</gene>
<evidence type="ECO:0000255" key="1">
    <source>
        <dbReference type="PROSITE-ProRule" id="PRU00335"/>
    </source>
</evidence>
<evidence type="ECO:0000305" key="2"/>